<proteinExistence type="inferred from homology"/>
<feature type="chain" id="PRO_1000142267" description="Large ribosomal subunit protein uL22">
    <location>
        <begin position="1"/>
        <end position="111"/>
    </location>
</feature>
<comment type="function">
    <text evidence="1">This protein binds specifically to 23S rRNA; its binding is stimulated by other ribosomal proteins, e.g. L4, L17, and L20. It is important during the early stages of 50S assembly. It makes multiple contacts with different domains of the 23S rRNA in the assembled 50S subunit and ribosome (By similarity).</text>
</comment>
<comment type="function">
    <text evidence="1">The globular domain of the protein is located near the polypeptide exit tunnel on the outside of the subunit, while an extended beta-hairpin is found that lines the wall of the exit tunnel in the center of the 70S ribosome.</text>
</comment>
<comment type="subunit">
    <text evidence="1">Part of the 50S ribosomal subunit.</text>
</comment>
<comment type="similarity">
    <text evidence="1">Belongs to the universal ribosomal protein uL22 family.</text>
</comment>
<dbReference type="EMBL" id="CP001124">
    <property type="protein sequence ID" value="ACH37959.1"/>
    <property type="molecule type" value="Genomic_DNA"/>
</dbReference>
<dbReference type="RefSeq" id="WP_012529371.1">
    <property type="nucleotide sequence ID" value="NC_011146.1"/>
</dbReference>
<dbReference type="SMR" id="B5EFQ5"/>
<dbReference type="STRING" id="404380.Gbem_0938"/>
<dbReference type="KEGG" id="gbm:Gbem_0938"/>
<dbReference type="eggNOG" id="COG0091">
    <property type="taxonomic scope" value="Bacteria"/>
</dbReference>
<dbReference type="HOGENOM" id="CLU_083987_3_3_7"/>
<dbReference type="OrthoDB" id="9805969at2"/>
<dbReference type="Proteomes" id="UP000008825">
    <property type="component" value="Chromosome"/>
</dbReference>
<dbReference type="GO" id="GO:0022625">
    <property type="term" value="C:cytosolic large ribosomal subunit"/>
    <property type="evidence" value="ECO:0007669"/>
    <property type="project" value="TreeGrafter"/>
</dbReference>
<dbReference type="GO" id="GO:0019843">
    <property type="term" value="F:rRNA binding"/>
    <property type="evidence" value="ECO:0007669"/>
    <property type="project" value="UniProtKB-UniRule"/>
</dbReference>
<dbReference type="GO" id="GO:0003735">
    <property type="term" value="F:structural constituent of ribosome"/>
    <property type="evidence" value="ECO:0007669"/>
    <property type="project" value="InterPro"/>
</dbReference>
<dbReference type="GO" id="GO:0006412">
    <property type="term" value="P:translation"/>
    <property type="evidence" value="ECO:0007669"/>
    <property type="project" value="UniProtKB-UniRule"/>
</dbReference>
<dbReference type="CDD" id="cd00336">
    <property type="entry name" value="Ribosomal_L22"/>
    <property type="match status" value="1"/>
</dbReference>
<dbReference type="Gene3D" id="3.90.470.10">
    <property type="entry name" value="Ribosomal protein L22/L17"/>
    <property type="match status" value="1"/>
</dbReference>
<dbReference type="HAMAP" id="MF_01331_B">
    <property type="entry name" value="Ribosomal_uL22_B"/>
    <property type="match status" value="1"/>
</dbReference>
<dbReference type="InterPro" id="IPR001063">
    <property type="entry name" value="Ribosomal_uL22"/>
</dbReference>
<dbReference type="InterPro" id="IPR005727">
    <property type="entry name" value="Ribosomal_uL22_bac/chlpt-type"/>
</dbReference>
<dbReference type="InterPro" id="IPR047867">
    <property type="entry name" value="Ribosomal_uL22_bac/org-type"/>
</dbReference>
<dbReference type="InterPro" id="IPR018260">
    <property type="entry name" value="Ribosomal_uL22_CS"/>
</dbReference>
<dbReference type="InterPro" id="IPR036394">
    <property type="entry name" value="Ribosomal_uL22_sf"/>
</dbReference>
<dbReference type="NCBIfam" id="TIGR01044">
    <property type="entry name" value="rplV_bact"/>
    <property type="match status" value="1"/>
</dbReference>
<dbReference type="PANTHER" id="PTHR13501">
    <property type="entry name" value="CHLOROPLAST 50S RIBOSOMAL PROTEIN L22-RELATED"/>
    <property type="match status" value="1"/>
</dbReference>
<dbReference type="PANTHER" id="PTHR13501:SF8">
    <property type="entry name" value="LARGE RIBOSOMAL SUBUNIT PROTEIN UL22M"/>
    <property type="match status" value="1"/>
</dbReference>
<dbReference type="Pfam" id="PF00237">
    <property type="entry name" value="Ribosomal_L22"/>
    <property type="match status" value="1"/>
</dbReference>
<dbReference type="SUPFAM" id="SSF54843">
    <property type="entry name" value="Ribosomal protein L22"/>
    <property type="match status" value="1"/>
</dbReference>
<dbReference type="PROSITE" id="PS00464">
    <property type="entry name" value="RIBOSOMAL_L22"/>
    <property type="match status" value="1"/>
</dbReference>
<protein>
    <recommendedName>
        <fullName evidence="1">Large ribosomal subunit protein uL22</fullName>
    </recommendedName>
    <alternativeName>
        <fullName evidence="2">50S ribosomal protein L22</fullName>
    </alternativeName>
</protein>
<evidence type="ECO:0000255" key="1">
    <source>
        <dbReference type="HAMAP-Rule" id="MF_01331"/>
    </source>
</evidence>
<evidence type="ECO:0000305" key="2"/>
<sequence>MESSAKLSSVRLSPRKTRLVVDLVRGKGIQTALNTLRFSPQPSAKLISKLLSSAVANAEQKGCSDVDKLFVKTIFVDGGAVLKRFTPRAMGRASKIRKPTSHITVVLAEKK</sequence>
<gene>
    <name evidence="1" type="primary">rplV</name>
    <name type="ordered locus">Gbem_0938</name>
</gene>
<reference key="1">
    <citation type="submission" date="2008-07" db="EMBL/GenBank/DDBJ databases">
        <title>Complete sequence of Geobacter bemidjiensis BEM.</title>
        <authorList>
            <consortium name="US DOE Joint Genome Institute"/>
            <person name="Lucas S."/>
            <person name="Copeland A."/>
            <person name="Lapidus A."/>
            <person name="Glavina del Rio T."/>
            <person name="Dalin E."/>
            <person name="Tice H."/>
            <person name="Bruce D."/>
            <person name="Goodwin L."/>
            <person name="Pitluck S."/>
            <person name="Kiss H."/>
            <person name="Brettin T."/>
            <person name="Detter J.C."/>
            <person name="Han C."/>
            <person name="Kuske C.R."/>
            <person name="Schmutz J."/>
            <person name="Larimer F."/>
            <person name="Land M."/>
            <person name="Hauser L."/>
            <person name="Kyrpides N."/>
            <person name="Lykidis A."/>
            <person name="Lovley D."/>
            <person name="Richardson P."/>
        </authorList>
    </citation>
    <scope>NUCLEOTIDE SEQUENCE [LARGE SCALE GENOMIC DNA]</scope>
    <source>
        <strain>ATCC BAA-1014 / DSM 16622 / JCM 12645 / Bem</strain>
    </source>
</reference>
<accession>B5EFQ5</accession>
<keyword id="KW-1185">Reference proteome</keyword>
<keyword id="KW-0687">Ribonucleoprotein</keyword>
<keyword id="KW-0689">Ribosomal protein</keyword>
<keyword id="KW-0694">RNA-binding</keyword>
<keyword id="KW-0699">rRNA-binding</keyword>
<name>RL22_CITBB</name>
<organism>
    <name type="scientific">Citrifermentans bemidjiense (strain ATCC BAA-1014 / DSM 16622 / JCM 12645 / Bem)</name>
    <name type="common">Geobacter bemidjiensis</name>
    <dbReference type="NCBI Taxonomy" id="404380"/>
    <lineage>
        <taxon>Bacteria</taxon>
        <taxon>Pseudomonadati</taxon>
        <taxon>Thermodesulfobacteriota</taxon>
        <taxon>Desulfuromonadia</taxon>
        <taxon>Geobacterales</taxon>
        <taxon>Geobacteraceae</taxon>
        <taxon>Citrifermentans</taxon>
    </lineage>
</organism>